<organism>
    <name type="scientific">Thermus virus P23-45</name>
    <name type="common">Thermus thermophilus phage P23-45</name>
    <dbReference type="NCBI Taxonomy" id="2914006"/>
    <lineage>
        <taxon>Viruses</taxon>
        <taxon>Duplodnaviria</taxon>
        <taxon>Heunggongvirae</taxon>
        <taxon>Uroviricota</taxon>
        <taxon>Caudoviricetes</taxon>
        <taxon>Oshimavirus</taxon>
        <taxon>Oshimavirus P2345</taxon>
    </lineage>
</organism>
<evidence type="ECO:0000250" key="1">
    <source>
        <dbReference type="UniProtKB" id="P03713"/>
    </source>
</evidence>
<evidence type="ECO:0000269" key="2">
    <source>
    </source>
</evidence>
<evidence type="ECO:0000305" key="3"/>
<evidence type="ECO:0000305" key="4">
    <source>
    </source>
</evidence>
<evidence type="ECO:0000312" key="5">
    <source>
        <dbReference type="EMBL" id="ABU96922.1"/>
    </source>
</evidence>
<gene>
    <name evidence="5" type="ORF">P23p89</name>
</gene>
<reference key="1">
    <citation type="journal article" date="2008" name="J. Mol. Biol.">
        <title>Genome comparison and proteomic characterization of Thermus thermophilus bacteriophages P23-45 and P74-26: siphoviruses with triplex-forming sequences and the longest known tails.</title>
        <authorList>
            <person name="Minakhin L."/>
            <person name="Goel M."/>
            <person name="Berdygulova Z."/>
            <person name="Ramanculov E."/>
            <person name="Florens L."/>
            <person name="Glazko G."/>
            <person name="Karamychev V.N."/>
            <person name="Slesarev A.I."/>
            <person name="Kozyavkin S.A."/>
            <person name="Khromov I."/>
            <person name="Ackermann H.W."/>
            <person name="Washburn M."/>
            <person name="Mushegian A."/>
            <person name="Severinov K."/>
        </authorList>
    </citation>
    <scope>NUCLEOTIDE SEQUENCE [GENOMIC DNA]</scope>
</reference>
<reference key="2">
    <citation type="journal article" date="2019" name="Proc. Natl. Acad. Sci. U.S.A.">
        <title>Cryo-EM structure and in vitro DNA packaging of a thermophilic virus with supersized T=7 capsids.</title>
        <authorList>
            <person name="Bayfield O.W."/>
            <person name="Klimuk E."/>
            <person name="Winkler D.C."/>
            <person name="Hesketh E.L."/>
            <person name="Chechik M."/>
            <person name="Cheng N."/>
            <person name="Dykeman E.C."/>
            <person name="Minakhin L."/>
            <person name="Ranson N.A."/>
            <person name="Severinov K."/>
            <person name="Steven A.C."/>
            <person name="Antson A.A."/>
        </authorList>
    </citation>
    <scope>STRUCTURE BY ELECTRON MICROSCOPY (3.74 ANGSTROMS)</scope>
    <scope>FUNCTION</scope>
    <scope>SUBUNIT</scope>
    <scope>INTERACTION WITH THE DECORATION PROTEIN</scope>
    <scope>INTERACTION WITH THE PORTAL PROTEIN</scope>
    <scope>SUBCELLULAR LOCATION</scope>
</reference>
<keyword id="KW-0002">3D-structure</keyword>
<keyword id="KW-0167">Capsid protein</keyword>
<keyword id="KW-1035">Host cytoplasm</keyword>
<keyword id="KW-1185">Reference proteome</keyword>
<keyword id="KW-1145">T=7 icosahedral capsid protein</keyword>
<keyword id="KW-0946">Virion</keyword>
<protein>
    <recommendedName>
        <fullName evidence="3">Major capsid protein</fullName>
    </recommendedName>
    <alternativeName>
        <fullName evidence="3">Gene product 89</fullName>
        <shortName evidence="3">gp89</shortName>
    </alternativeName>
    <alternativeName>
        <fullName evidence="3">Major head protein</fullName>
    </alternativeName>
</protein>
<proteinExistence type="evidence at protein level"/>
<sequence>MRVPININNALARVRDPLSIGGLKFPTTKEIQEAVAAIADKFNQENDLVDRFFPEDSTFASELELYLLRTQDAEQTGMTFVHQVGSTSLPVEARVAKVDLAKATWSPLAFKESRVWDEKEILYLGRLADEVQAGVINEQIAESLTWLMARMRNRRRWLTWQVMRTGRITIQPNDPYNPNGLKYVIDYGVTDIELPLPQKFDAKDGNGNSAVDPIQYFRDLIKAATYFPDRRPVAIIVGPGFDEVLADNTFVQKYVEYEKGWVVGQNTVQPPREVYRQAALDIFKRYTGLEVMVYDKTYRDQDGSVKYWIPVGELIVLNQSTGPVGRFVYTAHVAGQRNGKVVYATGPYLTVKDHLQDDPPYYAIIAGFHGLPQLSGYNTEDFSFHRFKWLKYANNVQSYLPPFPPKVEL</sequence>
<feature type="chain" id="PRO_0000447199" description="Major capsid protein">
    <location>
        <begin position="1"/>
        <end position="409"/>
    </location>
</feature>
<comment type="function">
    <text evidence="2">Assembles to form an icosahedric capsid shell with a T=7 symmetry although with a diameter of about 82 nm, which is a larger volume than the usual T=7 capsids (PubMed:30737287). A dramatic reconfiguration of the capsid shell that expands the procaspid from a diameter of 66 nm to a supersized capsid of 82 nm, allows packaging of the large viral DNA genome (PubMed:30737287). The capsid decoration protein binds the expanded capsid and stabilizes it (PubMed:30737287).</text>
</comment>
<comment type="subunit">
    <text evidence="2 4">Homomultimer (PubMed:30737287). Interacts with the portal protein (Probable). Interacts with the decoration protein (PubMed:30737287).</text>
</comment>
<comment type="subcellular location">
    <subcellularLocation>
        <location evidence="2">Virion</location>
    </subcellularLocation>
    <subcellularLocation>
        <location evidence="1">Host cytoplasm</location>
    </subcellularLocation>
    <text evidence="2">Forms the capsid icosahedric shell.</text>
</comment>
<comment type="similarity">
    <text evidence="3">Belongs to the lambda phage major capsid protein family.</text>
</comment>
<accession>A7XXC2</accession>
<dbReference type="EMBL" id="EU100883">
    <property type="protein sequence ID" value="ABU96922.1"/>
    <property type="molecule type" value="Genomic_DNA"/>
</dbReference>
<dbReference type="RefSeq" id="YP_001467942.1">
    <property type="nucleotide sequence ID" value="NC_009803.1"/>
</dbReference>
<dbReference type="PDB" id="6I9E">
    <property type="method" value="X-ray"/>
    <property type="resolution" value="3.74 A"/>
    <property type="chains" value="A/B/C/D/E/F/G=1-409"/>
</dbReference>
<dbReference type="PDB" id="6IBC">
    <property type="method" value="X-ray"/>
    <property type="resolution" value="4.39 A"/>
    <property type="chains" value="A/B/C/D/E/F/G=1-409"/>
</dbReference>
<dbReference type="PDBsum" id="6I9E"/>
<dbReference type="PDBsum" id="6IBC"/>
<dbReference type="EMDB" id="EMD-4433"/>
<dbReference type="EMDB" id="EMD-4447"/>
<dbReference type="SMR" id="A7XXC2"/>
<dbReference type="GeneID" id="5600496"/>
<dbReference type="KEGG" id="vg:5600496"/>
<dbReference type="Proteomes" id="UP000001132">
    <property type="component" value="Genome"/>
</dbReference>
<dbReference type="GO" id="GO:0030430">
    <property type="term" value="C:host cell cytoplasm"/>
    <property type="evidence" value="ECO:0007669"/>
    <property type="project" value="UniProtKB-SubCell"/>
</dbReference>
<dbReference type="GO" id="GO:0039620">
    <property type="term" value="C:T=7 icosahedral viral capsid"/>
    <property type="evidence" value="ECO:0007669"/>
    <property type="project" value="UniProtKB-KW"/>
</dbReference>
<dbReference type="InterPro" id="IPR005564">
    <property type="entry name" value="Major_capsid_GpE"/>
</dbReference>
<dbReference type="Pfam" id="PF03864">
    <property type="entry name" value="Phage_cap_E"/>
    <property type="match status" value="1"/>
</dbReference>
<organismHost>
    <name type="scientific">Thermus thermophilus</name>
    <dbReference type="NCBI Taxonomy" id="274"/>
</organismHost>
<name>CAPSD_BP234</name>